<sequence length="188" mass="20132">MMHPVASSNPAFCGPGKPSCLNEDAMRAADQFDIYSSQQSKYSHTVNHKPMVCQRQDPLNETHLQTTSGRSIEIKDELKKKKNLNRSGKRGRPSGTTKSAGYRTSTGRPLGTTKAAGFKTSPGRPLGTTKAAGYKVSPGRPPGSIKALSRLADLGYGCGTAAFPYPMMHGRAVHGVEETSSEVKPPNE</sequence>
<organism>
    <name type="scientific">Homo sapiens</name>
    <name type="common">Human</name>
    <dbReference type="NCBI Taxonomy" id="9606"/>
    <lineage>
        <taxon>Eukaryota</taxon>
        <taxon>Metazoa</taxon>
        <taxon>Chordata</taxon>
        <taxon>Craniata</taxon>
        <taxon>Vertebrata</taxon>
        <taxon>Euteleostomi</taxon>
        <taxon>Mammalia</taxon>
        <taxon>Eutheria</taxon>
        <taxon>Euarchontoglires</taxon>
        <taxon>Primates</taxon>
        <taxon>Haplorrhini</taxon>
        <taxon>Catarrhini</taxon>
        <taxon>Hominidae</taxon>
        <taxon>Homo</taxon>
    </lineage>
</organism>
<proteinExistence type="evidence at protein level"/>
<comment type="interaction">
    <interactant intactId="EBI-9995695">
        <id>Q7Z6I8</id>
    </interactant>
    <interactant intactId="EBI-743414">
        <id>O95967</id>
        <label>EFEMP2</label>
    </interactant>
    <organismsDiffer>false</organismsDiffer>
    <experiments>3</experiments>
</comment>
<comment type="interaction">
    <interactant intactId="EBI-9995695">
        <id>Q7Z6I8</id>
    </interactant>
    <interactant intactId="EBI-348567">
        <id>O75928-2</id>
        <label>PIAS2</label>
    </interactant>
    <organismsDiffer>false</organismsDiffer>
    <experiments>3</experiments>
</comment>
<comment type="alternative products">
    <event type="alternative splicing"/>
    <isoform>
        <id>Q7Z6I8-1</id>
        <name>1</name>
        <sequence type="displayed"/>
    </isoform>
    <isoform>
        <id>Q7Z6I8-2</id>
        <name>2</name>
        <sequence type="described" ref="VSP_027011"/>
    </isoform>
</comment>
<comment type="similarity">
    <text evidence="3">Belongs to the UPF0461 family.</text>
</comment>
<reference key="1">
    <citation type="submission" date="2006-01" db="EMBL/GenBank/DDBJ databases">
        <title>Physical and hematopoietic transcript map of a 5q31 critical subregion associated with the 5q- syndrome.</title>
        <authorList>
            <person name="Konstantinopoulou V."/>
        </authorList>
    </citation>
    <scope>NUCLEOTIDE SEQUENCE [MRNA] (ISOFORM 2)</scope>
    <source>
        <tissue>Blood</tissue>
    </source>
</reference>
<reference key="2">
    <citation type="journal article" date="2004" name="Nat. Genet.">
        <title>Complete sequencing and characterization of 21,243 full-length human cDNAs.</title>
        <authorList>
            <person name="Ota T."/>
            <person name="Suzuki Y."/>
            <person name="Nishikawa T."/>
            <person name="Otsuki T."/>
            <person name="Sugiyama T."/>
            <person name="Irie R."/>
            <person name="Wakamatsu A."/>
            <person name="Hayashi K."/>
            <person name="Sato H."/>
            <person name="Nagai K."/>
            <person name="Kimura K."/>
            <person name="Makita H."/>
            <person name="Sekine M."/>
            <person name="Obayashi M."/>
            <person name="Nishi T."/>
            <person name="Shibahara T."/>
            <person name="Tanaka T."/>
            <person name="Ishii S."/>
            <person name="Yamamoto J."/>
            <person name="Saito K."/>
            <person name="Kawai Y."/>
            <person name="Isono Y."/>
            <person name="Nakamura Y."/>
            <person name="Nagahari K."/>
            <person name="Murakami K."/>
            <person name="Yasuda T."/>
            <person name="Iwayanagi T."/>
            <person name="Wagatsuma M."/>
            <person name="Shiratori A."/>
            <person name="Sudo H."/>
            <person name="Hosoiri T."/>
            <person name="Kaku Y."/>
            <person name="Kodaira H."/>
            <person name="Kondo H."/>
            <person name="Sugawara M."/>
            <person name="Takahashi M."/>
            <person name="Kanda K."/>
            <person name="Yokoi T."/>
            <person name="Furuya T."/>
            <person name="Kikkawa E."/>
            <person name="Omura Y."/>
            <person name="Abe K."/>
            <person name="Kamihara K."/>
            <person name="Katsuta N."/>
            <person name="Sato K."/>
            <person name="Tanikawa M."/>
            <person name="Yamazaki M."/>
            <person name="Ninomiya K."/>
            <person name="Ishibashi T."/>
            <person name="Yamashita H."/>
            <person name="Murakawa K."/>
            <person name="Fujimori K."/>
            <person name="Tanai H."/>
            <person name="Kimata M."/>
            <person name="Watanabe M."/>
            <person name="Hiraoka S."/>
            <person name="Chiba Y."/>
            <person name="Ishida S."/>
            <person name="Ono Y."/>
            <person name="Takiguchi S."/>
            <person name="Watanabe S."/>
            <person name="Yosida M."/>
            <person name="Hotuta T."/>
            <person name="Kusano J."/>
            <person name="Kanehori K."/>
            <person name="Takahashi-Fujii A."/>
            <person name="Hara H."/>
            <person name="Tanase T.-O."/>
            <person name="Nomura Y."/>
            <person name="Togiya S."/>
            <person name="Komai F."/>
            <person name="Hara R."/>
            <person name="Takeuchi K."/>
            <person name="Arita M."/>
            <person name="Imose N."/>
            <person name="Musashino K."/>
            <person name="Yuuki H."/>
            <person name="Oshima A."/>
            <person name="Sasaki N."/>
            <person name="Aotsuka S."/>
            <person name="Yoshikawa Y."/>
            <person name="Matsunawa H."/>
            <person name="Ichihara T."/>
            <person name="Shiohata N."/>
            <person name="Sano S."/>
            <person name="Moriya S."/>
            <person name="Momiyama H."/>
            <person name="Satoh N."/>
            <person name="Takami S."/>
            <person name="Terashima Y."/>
            <person name="Suzuki O."/>
            <person name="Nakagawa S."/>
            <person name="Senoh A."/>
            <person name="Mizoguchi H."/>
            <person name="Goto Y."/>
            <person name="Shimizu F."/>
            <person name="Wakebe H."/>
            <person name="Hishigaki H."/>
            <person name="Watanabe T."/>
            <person name="Sugiyama A."/>
            <person name="Takemoto M."/>
            <person name="Kawakami B."/>
            <person name="Yamazaki M."/>
            <person name="Watanabe K."/>
            <person name="Kumagai A."/>
            <person name="Itakura S."/>
            <person name="Fukuzumi Y."/>
            <person name="Fujimori Y."/>
            <person name="Komiyama M."/>
            <person name="Tashiro H."/>
            <person name="Tanigami A."/>
            <person name="Fujiwara T."/>
            <person name="Ono T."/>
            <person name="Yamada K."/>
            <person name="Fujii Y."/>
            <person name="Ozaki K."/>
            <person name="Hirao M."/>
            <person name="Ohmori Y."/>
            <person name="Kawabata A."/>
            <person name="Hikiji T."/>
            <person name="Kobatake N."/>
            <person name="Inagaki H."/>
            <person name="Ikema Y."/>
            <person name="Okamoto S."/>
            <person name="Okitani R."/>
            <person name="Kawakami T."/>
            <person name="Noguchi S."/>
            <person name="Itoh T."/>
            <person name="Shigeta K."/>
            <person name="Senba T."/>
            <person name="Matsumura K."/>
            <person name="Nakajima Y."/>
            <person name="Mizuno T."/>
            <person name="Morinaga M."/>
            <person name="Sasaki M."/>
            <person name="Togashi T."/>
            <person name="Oyama M."/>
            <person name="Hata H."/>
            <person name="Watanabe M."/>
            <person name="Komatsu T."/>
            <person name="Mizushima-Sugano J."/>
            <person name="Satoh T."/>
            <person name="Shirai Y."/>
            <person name="Takahashi Y."/>
            <person name="Nakagawa K."/>
            <person name="Okumura K."/>
            <person name="Nagase T."/>
            <person name="Nomura N."/>
            <person name="Kikuchi H."/>
            <person name="Masuho Y."/>
            <person name="Yamashita R."/>
            <person name="Nakai K."/>
            <person name="Yada T."/>
            <person name="Nakamura Y."/>
            <person name="Ohara O."/>
            <person name="Isogai T."/>
            <person name="Sugano S."/>
        </authorList>
    </citation>
    <scope>NUCLEOTIDE SEQUENCE [LARGE SCALE MRNA] (ISOFORM 1)</scope>
    <source>
        <tissue>Corpus callosum</tissue>
    </source>
</reference>
<reference key="3">
    <citation type="submission" date="2005-09" db="EMBL/GenBank/DDBJ databases">
        <authorList>
            <person name="Mural R.J."/>
            <person name="Istrail S."/>
            <person name="Sutton G.G."/>
            <person name="Florea L."/>
            <person name="Halpern A.L."/>
            <person name="Mobarry C.M."/>
            <person name="Lippert R."/>
            <person name="Walenz B."/>
            <person name="Shatkay H."/>
            <person name="Dew I."/>
            <person name="Miller J.R."/>
            <person name="Flanigan M.J."/>
            <person name="Edwards N.J."/>
            <person name="Bolanos R."/>
            <person name="Fasulo D."/>
            <person name="Halldorsson B.V."/>
            <person name="Hannenhalli S."/>
            <person name="Turner R."/>
            <person name="Yooseph S."/>
            <person name="Lu F."/>
            <person name="Nusskern D.R."/>
            <person name="Shue B.C."/>
            <person name="Zheng X.H."/>
            <person name="Zhong F."/>
            <person name="Delcher A.L."/>
            <person name="Huson D.H."/>
            <person name="Kravitz S.A."/>
            <person name="Mouchard L."/>
            <person name="Reinert K."/>
            <person name="Remington K.A."/>
            <person name="Clark A.G."/>
            <person name="Waterman M.S."/>
            <person name="Eichler E.E."/>
            <person name="Adams M.D."/>
            <person name="Hunkapiller M.W."/>
            <person name="Myers E.W."/>
            <person name="Venter J.C."/>
        </authorList>
    </citation>
    <scope>NUCLEOTIDE SEQUENCE [LARGE SCALE GENOMIC DNA]</scope>
</reference>
<reference key="4">
    <citation type="journal article" date="2004" name="Genome Res.">
        <title>The status, quality, and expansion of the NIH full-length cDNA project: the Mammalian Gene Collection (MGC).</title>
        <authorList>
            <consortium name="The MGC Project Team"/>
        </authorList>
    </citation>
    <scope>NUCLEOTIDE SEQUENCE [LARGE SCALE MRNA] (ISOFORM 1)</scope>
    <source>
        <tissue>Skin</tissue>
    </source>
</reference>
<reference key="5">
    <citation type="journal article" date="2007" name="Science">
        <title>ATM and ATR substrate analysis reveals extensive protein networks responsive to DNA damage.</title>
        <authorList>
            <person name="Matsuoka S."/>
            <person name="Ballif B.A."/>
            <person name="Smogorzewska A."/>
            <person name="McDonald E.R. III"/>
            <person name="Hurov K.E."/>
            <person name="Luo J."/>
            <person name="Bakalarski C.E."/>
            <person name="Zhao Z."/>
            <person name="Solimini N."/>
            <person name="Lerenthal Y."/>
            <person name="Shiloh Y."/>
            <person name="Gygi S.P."/>
            <person name="Elledge S.J."/>
        </authorList>
    </citation>
    <scope>PHOSPHORYLATION [LARGE SCALE ANALYSIS] AT SER-37</scope>
    <scope>IDENTIFICATION BY MASS SPECTROMETRY [LARGE SCALE ANALYSIS]</scope>
    <source>
        <tissue>Embryonic kidney</tissue>
    </source>
</reference>
<reference key="6">
    <citation type="journal article" date="2013" name="J. Proteome Res.">
        <title>Toward a comprehensive characterization of a human cancer cell phosphoproteome.</title>
        <authorList>
            <person name="Zhou H."/>
            <person name="Di Palma S."/>
            <person name="Preisinger C."/>
            <person name="Peng M."/>
            <person name="Polat A.N."/>
            <person name="Heck A.J."/>
            <person name="Mohammed S."/>
        </authorList>
    </citation>
    <scope>PHOSPHORYLATION [LARGE SCALE ANALYSIS] AT SER-121 AND SER-180</scope>
    <scope>IDENTIFICATION BY MASS SPECTROMETRY [LARGE SCALE ANALYSIS]</scope>
    <source>
        <tissue>Cervix carcinoma</tissue>
        <tissue>Erythroleukemia</tissue>
    </source>
</reference>
<reference key="7">
    <citation type="journal article" date="2014" name="Nat. Struct. Mol. Biol.">
        <title>Uncovering global SUMOylation signaling networks in a site-specific manner.</title>
        <authorList>
            <person name="Hendriks I.A."/>
            <person name="D'Souza R.C."/>
            <person name="Yang B."/>
            <person name="Verlaan-de Vries M."/>
            <person name="Mann M."/>
            <person name="Vertegaal A.C."/>
        </authorList>
    </citation>
    <scope>SUMOYLATION [LARGE SCALE ANALYSIS] AT LYS-75</scope>
    <scope>IDENTIFICATION BY MASS SPECTROMETRY [LARGE SCALE ANALYSIS]</scope>
</reference>
<reference key="8">
    <citation type="journal article" date="2015" name="Mol. Cell. Proteomics">
        <title>System-wide analysis of SUMOylation dynamics in response to replication stress reveals novel small ubiquitin-like modified target proteins and acceptor lysines relevant for genome stability.</title>
        <authorList>
            <person name="Xiao Z."/>
            <person name="Chang J.G."/>
            <person name="Hendriks I.A."/>
            <person name="Sigurdsson J.O."/>
            <person name="Olsen J.V."/>
            <person name="Vertegaal A.C."/>
        </authorList>
    </citation>
    <scope>SUMOYLATION [LARGE SCALE ANALYSIS] AT LYS-75</scope>
    <scope>IDENTIFICATION BY MASS SPECTROMETRY [LARGE SCALE ANALYSIS]</scope>
</reference>
<reference key="9">
    <citation type="journal article" date="2017" name="Nat. Struct. Mol. Biol.">
        <title>Site-specific mapping of the human SUMO proteome reveals co-modification with phosphorylation.</title>
        <authorList>
            <person name="Hendriks I.A."/>
            <person name="Lyon D."/>
            <person name="Young C."/>
            <person name="Jensen L.J."/>
            <person name="Vertegaal A.C."/>
            <person name="Nielsen M.L."/>
        </authorList>
    </citation>
    <scope>SUMOYLATION [LARGE SCALE ANALYSIS] AT LYS-75 AND LYS-184</scope>
    <scope>IDENTIFICATION BY MASS SPECTROMETRY [LARGE SCALE ANALYSIS]</scope>
</reference>
<name>CE024_HUMAN</name>
<gene>
    <name type="primary">C5orf24</name>
</gene>
<feature type="chain" id="PRO_0000295708" description="UPF0461 protein C5orf24">
    <location>
        <begin position="1"/>
        <end position="188"/>
    </location>
</feature>
<feature type="region of interest" description="Disordered" evidence="1">
    <location>
        <begin position="1"/>
        <end position="20"/>
    </location>
</feature>
<feature type="region of interest" description="Disordered" evidence="1">
    <location>
        <begin position="79"/>
        <end position="142"/>
    </location>
</feature>
<feature type="compositionally biased region" description="Polar residues" evidence="1">
    <location>
        <begin position="1"/>
        <end position="10"/>
    </location>
</feature>
<feature type="compositionally biased region" description="Basic residues" evidence="1">
    <location>
        <begin position="80"/>
        <end position="92"/>
    </location>
</feature>
<feature type="compositionally biased region" description="Polar residues" evidence="1">
    <location>
        <begin position="94"/>
        <end position="107"/>
    </location>
</feature>
<feature type="modified residue" description="Phosphoserine" evidence="4">
    <location>
        <position position="37"/>
    </location>
</feature>
<feature type="modified residue" description="Phosphoserine" evidence="5">
    <location>
        <position position="121"/>
    </location>
</feature>
<feature type="modified residue" description="Phosphoserine" evidence="5">
    <location>
        <position position="180"/>
    </location>
</feature>
<feature type="cross-link" description="Glycyl lysine isopeptide (Lys-Gly) (interchain with G-Cter in SUMO2)" evidence="6 7 8">
    <location>
        <position position="75"/>
    </location>
</feature>
<feature type="cross-link" description="Glycyl lysine isopeptide (Lys-Gly) (interchain with G-Cter in SUMO2)" evidence="8">
    <location>
        <position position="184"/>
    </location>
</feature>
<feature type="splice variant" id="VSP_027011" description="In isoform 2." evidence="2">
    <original>SIKALSRLADLGYGCGTAAFPYPMMHGRAVHGVEETSSEVKPPNE</original>
    <variation>KKQQAFRCSSDA</variation>
    <location>
        <begin position="144"/>
        <end position="188"/>
    </location>
</feature>
<feature type="sequence conflict" description="In Ref. 2; BAC04448." evidence="3" ref="2">
    <original>A</original>
    <variation>V</variation>
    <location>
        <position position="161"/>
    </location>
</feature>
<evidence type="ECO:0000256" key="1">
    <source>
        <dbReference type="SAM" id="MobiDB-lite"/>
    </source>
</evidence>
<evidence type="ECO:0000303" key="2">
    <source ref="1"/>
</evidence>
<evidence type="ECO:0000305" key="3"/>
<evidence type="ECO:0007744" key="4">
    <source>
    </source>
</evidence>
<evidence type="ECO:0007744" key="5">
    <source>
    </source>
</evidence>
<evidence type="ECO:0007744" key="6">
    <source>
    </source>
</evidence>
<evidence type="ECO:0007744" key="7">
    <source>
    </source>
</evidence>
<evidence type="ECO:0007744" key="8">
    <source>
    </source>
</evidence>
<keyword id="KW-0025">Alternative splicing</keyword>
<keyword id="KW-1017">Isopeptide bond</keyword>
<keyword id="KW-0597">Phosphoprotein</keyword>
<keyword id="KW-1267">Proteomics identification</keyword>
<keyword id="KW-1185">Reference proteome</keyword>
<keyword id="KW-0832">Ubl conjugation</keyword>
<protein>
    <recommendedName>
        <fullName>UPF0461 protein C5orf24</fullName>
    </recommendedName>
</protein>
<dbReference type="EMBL" id="AJ437658">
    <property type="protein sequence ID" value="CAD26900.2"/>
    <property type="molecule type" value="mRNA"/>
</dbReference>
<dbReference type="EMBL" id="AK094881">
    <property type="protein sequence ID" value="BAC04448.1"/>
    <property type="molecule type" value="mRNA"/>
</dbReference>
<dbReference type="EMBL" id="CH471062">
    <property type="protein sequence ID" value="EAW62234.1"/>
    <property type="molecule type" value="Genomic_DNA"/>
</dbReference>
<dbReference type="EMBL" id="CH471062">
    <property type="protein sequence ID" value="EAW62235.1"/>
    <property type="molecule type" value="Genomic_DNA"/>
</dbReference>
<dbReference type="EMBL" id="CH471062">
    <property type="protein sequence ID" value="EAW62236.1"/>
    <property type="molecule type" value="Genomic_DNA"/>
</dbReference>
<dbReference type="EMBL" id="BC053677">
    <property type="protein sequence ID" value="AAH53677.1"/>
    <property type="molecule type" value="mRNA"/>
</dbReference>
<dbReference type="CCDS" id="CCDS4179.1">
    <molecule id="Q7Z6I8-1"/>
</dbReference>
<dbReference type="CCDS" id="CCDS75307.1">
    <molecule id="Q7Z6I8-2"/>
</dbReference>
<dbReference type="RefSeq" id="NP_001129058.1">
    <molecule id="Q7Z6I8-1"/>
    <property type="nucleotide sequence ID" value="NM_001135586.1"/>
</dbReference>
<dbReference type="RefSeq" id="NP_001287823.1">
    <molecule id="Q7Z6I8-2"/>
    <property type="nucleotide sequence ID" value="NM_001300894.2"/>
</dbReference>
<dbReference type="RefSeq" id="NP_689622.2">
    <molecule id="Q7Z6I8-1"/>
    <property type="nucleotide sequence ID" value="NM_152409.3"/>
</dbReference>
<dbReference type="RefSeq" id="XP_005271946.1">
    <molecule id="Q7Z6I8-1"/>
    <property type="nucleotide sequence ID" value="XM_005271889.4"/>
</dbReference>
<dbReference type="RefSeq" id="XP_016864538.1">
    <molecule id="Q7Z6I8-1"/>
    <property type="nucleotide sequence ID" value="XM_017009049.2"/>
</dbReference>
<dbReference type="RefSeq" id="XP_016864539.1">
    <molecule id="Q7Z6I8-1"/>
    <property type="nucleotide sequence ID" value="XM_017009050.2"/>
</dbReference>
<dbReference type="RefSeq" id="XP_054207626.1">
    <molecule id="Q7Z6I8-1"/>
    <property type="nucleotide sequence ID" value="XM_054351651.1"/>
</dbReference>
<dbReference type="RefSeq" id="XP_054207627.1">
    <molecule id="Q7Z6I8-1"/>
    <property type="nucleotide sequence ID" value="XM_054351652.1"/>
</dbReference>
<dbReference type="RefSeq" id="XP_054207628.1">
    <molecule id="Q7Z6I8-1"/>
    <property type="nucleotide sequence ID" value="XM_054351653.1"/>
</dbReference>
<dbReference type="BioGRID" id="126409">
    <property type="interactions" value="51"/>
</dbReference>
<dbReference type="FunCoup" id="Q7Z6I8">
    <property type="interactions" value="1593"/>
</dbReference>
<dbReference type="IntAct" id="Q7Z6I8">
    <property type="interactions" value="38"/>
</dbReference>
<dbReference type="MINT" id="Q7Z6I8"/>
<dbReference type="STRING" id="9606.ENSP00000378427"/>
<dbReference type="GlyGen" id="Q7Z6I8">
    <property type="glycosylation" value="1 site, 1 O-linked glycan (1 site)"/>
</dbReference>
<dbReference type="iPTMnet" id="Q7Z6I8"/>
<dbReference type="PhosphoSitePlus" id="Q7Z6I8"/>
<dbReference type="SwissPalm" id="Q7Z6I8"/>
<dbReference type="BioMuta" id="C5orf24"/>
<dbReference type="DMDM" id="74738816"/>
<dbReference type="jPOST" id="Q7Z6I8"/>
<dbReference type="MassIVE" id="Q7Z6I8"/>
<dbReference type="PaxDb" id="9606-ENSP00000378427"/>
<dbReference type="PeptideAtlas" id="Q7Z6I8"/>
<dbReference type="ProteomicsDB" id="69415">
    <molecule id="Q7Z6I8-1"/>
</dbReference>
<dbReference type="ProteomicsDB" id="69416">
    <molecule id="Q7Z6I8-2"/>
</dbReference>
<dbReference type="Pumba" id="Q7Z6I8"/>
<dbReference type="Antibodypedia" id="45237">
    <property type="antibodies" value="71 antibodies from 14 providers"/>
</dbReference>
<dbReference type="DNASU" id="134553"/>
<dbReference type="Ensembl" id="ENST00000338051.4">
    <molecule id="Q7Z6I8-1"/>
    <property type="protein sequence ID" value="ENSP00000337044.4"/>
    <property type="gene ID" value="ENSG00000181904.9"/>
</dbReference>
<dbReference type="Ensembl" id="ENST00000394976.4">
    <molecule id="Q7Z6I8-1"/>
    <property type="protein sequence ID" value="ENSP00000378427.3"/>
    <property type="gene ID" value="ENSG00000181904.9"/>
</dbReference>
<dbReference type="Ensembl" id="ENST00000435259.2">
    <molecule id="Q7Z6I8-1"/>
    <property type="protein sequence ID" value="ENSP00000395764.2"/>
    <property type="gene ID" value="ENSG00000181904.9"/>
</dbReference>
<dbReference type="Ensembl" id="ENST00000504727.1">
    <molecule id="Q7Z6I8-2"/>
    <property type="protein sequence ID" value="ENSP00000421647.1"/>
    <property type="gene ID" value="ENSG00000181904.9"/>
</dbReference>
<dbReference type="GeneID" id="134553"/>
<dbReference type="KEGG" id="hsa:134553"/>
<dbReference type="MANE-Select" id="ENST00000394976.4">
    <property type="protein sequence ID" value="ENSP00000378427.3"/>
    <property type="RefSeq nucleotide sequence ID" value="NM_001135586.1"/>
    <property type="RefSeq protein sequence ID" value="NP_001129058.1"/>
</dbReference>
<dbReference type="UCSC" id="uc003kzx.4">
    <molecule id="Q7Z6I8-1"/>
    <property type="organism name" value="human"/>
</dbReference>
<dbReference type="AGR" id="HGNC:26746"/>
<dbReference type="CTD" id="134553"/>
<dbReference type="DisGeNET" id="134553"/>
<dbReference type="GeneCards" id="C5orf24"/>
<dbReference type="HGNC" id="HGNC:26746">
    <property type="gene designation" value="C5orf24"/>
</dbReference>
<dbReference type="HPA" id="ENSG00000181904">
    <property type="expression patterns" value="Low tissue specificity"/>
</dbReference>
<dbReference type="neXtProt" id="NX_Q7Z6I8"/>
<dbReference type="OpenTargets" id="ENSG00000181904"/>
<dbReference type="PharmGKB" id="PA144596505"/>
<dbReference type="VEuPathDB" id="HostDB:ENSG00000181904"/>
<dbReference type="eggNOG" id="ENOG502RZTV">
    <property type="taxonomic scope" value="Eukaryota"/>
</dbReference>
<dbReference type="GeneTree" id="ENSGT00390000014889"/>
<dbReference type="HOGENOM" id="CLU_090677_0_0_1"/>
<dbReference type="InParanoid" id="Q7Z6I8"/>
<dbReference type="OMA" id="TAHFDLC"/>
<dbReference type="OrthoDB" id="10072110at2759"/>
<dbReference type="PAN-GO" id="Q7Z6I8">
    <property type="GO annotations" value="0 GO annotations based on evolutionary models"/>
</dbReference>
<dbReference type="PhylomeDB" id="Q7Z6I8"/>
<dbReference type="TreeFam" id="TF333072"/>
<dbReference type="PathwayCommons" id="Q7Z6I8"/>
<dbReference type="SignaLink" id="Q7Z6I8"/>
<dbReference type="BioGRID-ORCS" id="134553">
    <property type="hits" value="7 hits in 1127 CRISPR screens"/>
</dbReference>
<dbReference type="ChiTaRS" id="C5orf24">
    <property type="organism name" value="human"/>
</dbReference>
<dbReference type="GenomeRNAi" id="134553"/>
<dbReference type="Pharos" id="Q7Z6I8">
    <property type="development level" value="Tdark"/>
</dbReference>
<dbReference type="PRO" id="PR:Q7Z6I8"/>
<dbReference type="Proteomes" id="UP000005640">
    <property type="component" value="Chromosome 5"/>
</dbReference>
<dbReference type="RNAct" id="Q7Z6I8">
    <property type="molecule type" value="protein"/>
</dbReference>
<dbReference type="Bgee" id="ENSG00000181904">
    <property type="expression patterns" value="Expressed in kidney epithelium and 196 other cell types or tissues"/>
</dbReference>
<dbReference type="ExpressionAtlas" id="Q7Z6I8">
    <property type="expression patterns" value="baseline and differential"/>
</dbReference>
<dbReference type="InterPro" id="IPR040419">
    <property type="entry name" value="DUF5568"/>
</dbReference>
<dbReference type="PANTHER" id="PTHR31894">
    <property type="entry name" value="UPF0461 PROTEIN C5ORF24"/>
    <property type="match status" value="1"/>
</dbReference>
<dbReference type="PANTHER" id="PTHR31894:SF0">
    <property type="entry name" value="UPF0461 PROTEIN C5ORF24"/>
    <property type="match status" value="1"/>
</dbReference>
<dbReference type="Pfam" id="PF17724">
    <property type="entry name" value="DUF5568"/>
    <property type="match status" value="1"/>
</dbReference>
<accession>Q7Z6I8</accession>
<accession>D3DQA7</accession>
<accession>Q86Y53</accession>
<accession>Q8N1T9</accession>